<evidence type="ECO:0000255" key="1">
    <source>
        <dbReference type="HAMAP-Rule" id="MF_00131"/>
    </source>
</evidence>
<gene>
    <name evidence="1" type="primary">trpA</name>
</gene>
<protein>
    <recommendedName>
        <fullName evidence="1">Tryptophan synthase alpha chain</fullName>
        <ecNumber evidence="1">4.2.1.20</ecNumber>
    </recommendedName>
</protein>
<sequence length="269" mass="30301">MNRYQTLQKKLVPFKKGCFIPFIILGDPSIEMSLKIIDVLIENGADGLELGFPFSDPLSDGKTIQKAHLRAFSSKMNIYLCFEMLQKIRKKYNTIPIGLLLYANLIFKFGINNFYLKCFNVGIDSVLIADLPVEESNDFRKCAIANNISSVFVCPHDAKKNVIKKISLYSTGYIYLLSRSGVTGTDKKIIVPSLNLIKNLKKITEKLLIQGFGISNSKQIQKIILSGISGVICGSVIIKLIENHFQNEKKMLKNIKRLSRSLKQSTIIF</sequence>
<reference key="1">
    <citation type="journal article" date="1995" name="Insect Mol. Biol.">
        <title>Genetics of the tryptophan biosynthetic pathway of the prokaryotic endosymbiont (Buchnera) of the aphid Schlechtendalia chinensis.</title>
        <authorList>
            <person name="Lai C.-Y."/>
            <person name="Baumann P."/>
            <person name="Moran N.A."/>
        </authorList>
    </citation>
    <scope>NUCLEOTIDE SEQUENCE [GENOMIC DNA]</scope>
</reference>
<keyword id="KW-0028">Amino-acid biosynthesis</keyword>
<keyword id="KW-0057">Aromatic amino acid biosynthesis</keyword>
<keyword id="KW-0456">Lyase</keyword>
<keyword id="KW-0822">Tryptophan biosynthesis</keyword>
<comment type="function">
    <text evidence="1">The alpha subunit is responsible for the aldol cleavage of indoleglycerol phosphate to indole and glyceraldehyde 3-phosphate.</text>
</comment>
<comment type="catalytic activity">
    <reaction evidence="1">
        <text>(1S,2R)-1-C-(indol-3-yl)glycerol 3-phosphate + L-serine = D-glyceraldehyde 3-phosphate + L-tryptophan + H2O</text>
        <dbReference type="Rhea" id="RHEA:10532"/>
        <dbReference type="ChEBI" id="CHEBI:15377"/>
        <dbReference type="ChEBI" id="CHEBI:33384"/>
        <dbReference type="ChEBI" id="CHEBI:57912"/>
        <dbReference type="ChEBI" id="CHEBI:58866"/>
        <dbReference type="ChEBI" id="CHEBI:59776"/>
        <dbReference type="EC" id="4.2.1.20"/>
    </reaction>
</comment>
<comment type="pathway">
    <text evidence="1">Amino-acid biosynthesis; L-tryptophan biosynthesis; L-tryptophan from chorismate: step 5/5.</text>
</comment>
<comment type="subunit">
    <text evidence="1">Tetramer of two alpha and two beta chains.</text>
</comment>
<comment type="similarity">
    <text evidence="1">Belongs to the TrpA family.</text>
</comment>
<accession>Q44604</accession>
<dbReference type="EC" id="4.2.1.20" evidence="1"/>
<dbReference type="EMBL" id="U09185">
    <property type="protein sequence ID" value="AAA92797.1"/>
    <property type="molecule type" value="Genomic_DNA"/>
</dbReference>
<dbReference type="SMR" id="Q44604"/>
<dbReference type="STRING" id="118110.XW81_01300"/>
<dbReference type="UniPathway" id="UPA00035">
    <property type="reaction ID" value="UER00044"/>
</dbReference>
<dbReference type="GO" id="GO:0005829">
    <property type="term" value="C:cytosol"/>
    <property type="evidence" value="ECO:0007669"/>
    <property type="project" value="TreeGrafter"/>
</dbReference>
<dbReference type="GO" id="GO:0004834">
    <property type="term" value="F:tryptophan synthase activity"/>
    <property type="evidence" value="ECO:0007669"/>
    <property type="project" value="UniProtKB-UniRule"/>
</dbReference>
<dbReference type="CDD" id="cd04724">
    <property type="entry name" value="Tryptophan_synthase_alpha"/>
    <property type="match status" value="1"/>
</dbReference>
<dbReference type="FunFam" id="3.20.20.70:FF:000037">
    <property type="entry name" value="Tryptophan synthase alpha chain"/>
    <property type="match status" value="1"/>
</dbReference>
<dbReference type="Gene3D" id="3.20.20.70">
    <property type="entry name" value="Aldolase class I"/>
    <property type="match status" value="1"/>
</dbReference>
<dbReference type="HAMAP" id="MF_00131">
    <property type="entry name" value="Trp_synth_alpha"/>
    <property type="match status" value="1"/>
</dbReference>
<dbReference type="InterPro" id="IPR013785">
    <property type="entry name" value="Aldolase_TIM"/>
</dbReference>
<dbReference type="InterPro" id="IPR011060">
    <property type="entry name" value="RibuloseP-bd_barrel"/>
</dbReference>
<dbReference type="InterPro" id="IPR018204">
    <property type="entry name" value="Trp_synthase_alpha_AS"/>
</dbReference>
<dbReference type="InterPro" id="IPR002028">
    <property type="entry name" value="Trp_synthase_suA"/>
</dbReference>
<dbReference type="NCBIfam" id="TIGR00262">
    <property type="entry name" value="trpA"/>
    <property type="match status" value="1"/>
</dbReference>
<dbReference type="PANTHER" id="PTHR43406:SF1">
    <property type="entry name" value="TRYPTOPHAN SYNTHASE ALPHA CHAIN, CHLOROPLASTIC"/>
    <property type="match status" value="1"/>
</dbReference>
<dbReference type="PANTHER" id="PTHR43406">
    <property type="entry name" value="TRYPTOPHAN SYNTHASE, ALPHA CHAIN"/>
    <property type="match status" value="1"/>
</dbReference>
<dbReference type="Pfam" id="PF00290">
    <property type="entry name" value="Trp_syntA"/>
    <property type="match status" value="1"/>
</dbReference>
<dbReference type="SUPFAM" id="SSF51366">
    <property type="entry name" value="Ribulose-phoshate binding barrel"/>
    <property type="match status" value="1"/>
</dbReference>
<dbReference type="PROSITE" id="PS00167">
    <property type="entry name" value="TRP_SYNTHASE_ALPHA"/>
    <property type="match status" value="1"/>
</dbReference>
<name>TRPA_BUCSC</name>
<feature type="chain" id="PRO_0000098759" description="Tryptophan synthase alpha chain">
    <location>
        <begin position="1"/>
        <end position="269"/>
    </location>
</feature>
<feature type="active site" description="Proton acceptor" evidence="1">
    <location>
        <position position="49"/>
    </location>
</feature>
<feature type="active site" description="Proton acceptor" evidence="1">
    <location>
        <position position="60"/>
    </location>
</feature>
<organism>
    <name type="scientific">Buchnera aphidicola subsp. Schlechtendalia chinensis</name>
    <dbReference type="NCBI Taxonomy" id="118110"/>
    <lineage>
        <taxon>Bacteria</taxon>
        <taxon>Pseudomonadati</taxon>
        <taxon>Pseudomonadota</taxon>
        <taxon>Gammaproteobacteria</taxon>
        <taxon>Enterobacterales</taxon>
        <taxon>Erwiniaceae</taxon>
        <taxon>Buchnera</taxon>
    </lineage>
</organism>
<proteinExistence type="inferred from homology"/>